<reference key="1">
    <citation type="journal article" date="2007" name="ISME J.">
        <title>Population level functional diversity in a microbial community revealed by comparative genomic and metagenomic analyses.</title>
        <authorList>
            <person name="Bhaya D."/>
            <person name="Grossman A.R."/>
            <person name="Steunou A.-S."/>
            <person name="Khuri N."/>
            <person name="Cohan F.M."/>
            <person name="Hamamura N."/>
            <person name="Melendrez M.C."/>
            <person name="Bateson M.M."/>
            <person name="Ward D.M."/>
            <person name="Heidelberg J.F."/>
        </authorList>
    </citation>
    <scope>NUCLEOTIDE SEQUENCE [LARGE SCALE GENOMIC DNA]</scope>
    <source>
        <strain>JA-3-3Ab</strain>
    </source>
</reference>
<accession>Q2JQB9</accession>
<dbReference type="EC" id="2.7.4.8" evidence="2"/>
<dbReference type="EMBL" id="CP000239">
    <property type="protein sequence ID" value="ABD00807.1"/>
    <property type="molecule type" value="Genomic_DNA"/>
</dbReference>
<dbReference type="SMR" id="Q2JQB9"/>
<dbReference type="STRING" id="321327.CYA_2697"/>
<dbReference type="KEGG" id="cya:CYA_2697"/>
<dbReference type="eggNOG" id="COG0194">
    <property type="taxonomic scope" value="Bacteria"/>
</dbReference>
<dbReference type="HOGENOM" id="CLU_001715_1_2_3"/>
<dbReference type="OrthoDB" id="9808150at2"/>
<dbReference type="Proteomes" id="UP000008818">
    <property type="component" value="Chromosome"/>
</dbReference>
<dbReference type="GO" id="GO:0005829">
    <property type="term" value="C:cytosol"/>
    <property type="evidence" value="ECO:0007669"/>
    <property type="project" value="TreeGrafter"/>
</dbReference>
<dbReference type="GO" id="GO:0005524">
    <property type="term" value="F:ATP binding"/>
    <property type="evidence" value="ECO:0007669"/>
    <property type="project" value="UniProtKB-UniRule"/>
</dbReference>
<dbReference type="GO" id="GO:0004385">
    <property type="term" value="F:guanylate kinase activity"/>
    <property type="evidence" value="ECO:0007669"/>
    <property type="project" value="UniProtKB-UniRule"/>
</dbReference>
<dbReference type="CDD" id="cd00071">
    <property type="entry name" value="GMPK"/>
    <property type="match status" value="1"/>
</dbReference>
<dbReference type="FunFam" id="3.30.63.10:FF:000002">
    <property type="entry name" value="Guanylate kinase 1"/>
    <property type="match status" value="1"/>
</dbReference>
<dbReference type="Gene3D" id="3.30.63.10">
    <property type="entry name" value="Guanylate Kinase phosphate binding domain"/>
    <property type="match status" value="1"/>
</dbReference>
<dbReference type="Gene3D" id="3.40.50.300">
    <property type="entry name" value="P-loop containing nucleotide triphosphate hydrolases"/>
    <property type="match status" value="2"/>
</dbReference>
<dbReference type="HAMAP" id="MF_00328">
    <property type="entry name" value="Guanylate_kinase"/>
    <property type="match status" value="1"/>
</dbReference>
<dbReference type="InterPro" id="IPR008145">
    <property type="entry name" value="GK/Ca_channel_bsu"/>
</dbReference>
<dbReference type="InterPro" id="IPR008144">
    <property type="entry name" value="Guanylate_kin-like_dom"/>
</dbReference>
<dbReference type="InterPro" id="IPR017665">
    <property type="entry name" value="Guanylate_kinase"/>
</dbReference>
<dbReference type="InterPro" id="IPR020590">
    <property type="entry name" value="Guanylate_kinase_CS"/>
</dbReference>
<dbReference type="InterPro" id="IPR027417">
    <property type="entry name" value="P-loop_NTPase"/>
</dbReference>
<dbReference type="NCBIfam" id="TIGR03263">
    <property type="entry name" value="guanyl_kin"/>
    <property type="match status" value="1"/>
</dbReference>
<dbReference type="PANTHER" id="PTHR23117:SF13">
    <property type="entry name" value="GUANYLATE KINASE"/>
    <property type="match status" value="1"/>
</dbReference>
<dbReference type="PANTHER" id="PTHR23117">
    <property type="entry name" value="GUANYLATE KINASE-RELATED"/>
    <property type="match status" value="1"/>
</dbReference>
<dbReference type="Pfam" id="PF00625">
    <property type="entry name" value="Guanylate_kin"/>
    <property type="match status" value="1"/>
</dbReference>
<dbReference type="SMART" id="SM00072">
    <property type="entry name" value="GuKc"/>
    <property type="match status" value="1"/>
</dbReference>
<dbReference type="SUPFAM" id="SSF52540">
    <property type="entry name" value="P-loop containing nucleoside triphosphate hydrolases"/>
    <property type="match status" value="1"/>
</dbReference>
<dbReference type="PROSITE" id="PS00856">
    <property type="entry name" value="GUANYLATE_KINASE_1"/>
    <property type="match status" value="1"/>
</dbReference>
<dbReference type="PROSITE" id="PS50052">
    <property type="entry name" value="GUANYLATE_KINASE_2"/>
    <property type="match status" value="1"/>
</dbReference>
<proteinExistence type="inferred from homology"/>
<keyword id="KW-0067">ATP-binding</keyword>
<keyword id="KW-0963">Cytoplasm</keyword>
<keyword id="KW-0418">Kinase</keyword>
<keyword id="KW-0547">Nucleotide-binding</keyword>
<keyword id="KW-0808">Transferase</keyword>
<organism>
    <name type="scientific">Synechococcus sp. (strain JA-3-3Ab)</name>
    <name type="common">Cyanobacteria bacterium Yellowstone A-Prime</name>
    <dbReference type="NCBI Taxonomy" id="321327"/>
    <lineage>
        <taxon>Bacteria</taxon>
        <taxon>Bacillati</taxon>
        <taxon>Cyanobacteriota</taxon>
        <taxon>Cyanophyceae</taxon>
        <taxon>Synechococcales</taxon>
        <taxon>Synechococcaceae</taxon>
        <taxon>Synechococcus</taxon>
    </lineage>
</organism>
<comment type="function">
    <text evidence="2">Essential for recycling GMP and indirectly, cGMP.</text>
</comment>
<comment type="function">
    <text evidence="1">(Microbial infection) Catalyzes the phosphorylation of dZMP to dZDP, when the bacterium is infected by a phage that produces the substrate for the synthesis of dZTP (2- amino-2'-deoxyadenosine 5'-triphosphate), which is then used by the phage as a DNA polymerase substrate.</text>
</comment>
<comment type="catalytic activity">
    <reaction evidence="2">
        <text>GMP + ATP = GDP + ADP</text>
        <dbReference type="Rhea" id="RHEA:20780"/>
        <dbReference type="ChEBI" id="CHEBI:30616"/>
        <dbReference type="ChEBI" id="CHEBI:58115"/>
        <dbReference type="ChEBI" id="CHEBI:58189"/>
        <dbReference type="ChEBI" id="CHEBI:456216"/>
        <dbReference type="EC" id="2.7.4.8"/>
    </reaction>
</comment>
<comment type="catalytic activity">
    <reaction evidence="1">
        <text>dZMP + ATP = dZDP + ADP</text>
        <dbReference type="Rhea" id="RHEA:67640"/>
        <dbReference type="ChEBI" id="CHEBI:30616"/>
        <dbReference type="ChEBI" id="CHEBI:172927"/>
        <dbReference type="ChEBI" id="CHEBI:172929"/>
        <dbReference type="ChEBI" id="CHEBI:456216"/>
    </reaction>
</comment>
<comment type="pathway">
    <text evidence="1">Purine metabolism.</text>
</comment>
<comment type="subcellular location">
    <subcellularLocation>
        <location evidence="2">Cytoplasm</location>
    </subcellularLocation>
</comment>
<comment type="similarity">
    <text evidence="2">Belongs to the guanylate kinase family.</text>
</comment>
<sequence>MAVSSTTLSSPTPPECLQQQEAPRPPATRGRLVVLTGPSGVGKGTLVSQLRQRHPELYFSVSVTTRPPRPGEQEGVNYYFRTREEFLNLIEADELLEWAQYAGNFYGTPREIVFQKLSQGQDVLLEIELAGARQVRQQCPDAIRIFLSPPSLEELERRIRERGQDSEASIQRRLQQARKELDAKDEFDYVIVNDNLEQALQELEALLYPPSPGKGQS</sequence>
<feature type="chain" id="PRO_0000266424" description="Guanylate kinase">
    <location>
        <begin position="1"/>
        <end position="217"/>
    </location>
</feature>
<feature type="domain" description="Guanylate kinase-like" evidence="2">
    <location>
        <begin position="30"/>
        <end position="208"/>
    </location>
</feature>
<feature type="region of interest" description="Disordered" evidence="3">
    <location>
        <begin position="1"/>
        <end position="30"/>
    </location>
</feature>
<feature type="compositionally biased region" description="Low complexity" evidence="3">
    <location>
        <begin position="1"/>
        <end position="10"/>
    </location>
</feature>
<feature type="binding site" evidence="2">
    <location>
        <begin position="37"/>
        <end position="44"/>
    </location>
    <ligand>
        <name>ATP</name>
        <dbReference type="ChEBI" id="CHEBI:30616"/>
    </ligand>
</feature>
<evidence type="ECO:0000250" key="1">
    <source>
        <dbReference type="UniProtKB" id="Q9KNM4"/>
    </source>
</evidence>
<evidence type="ECO:0000255" key="2">
    <source>
        <dbReference type="HAMAP-Rule" id="MF_00328"/>
    </source>
</evidence>
<evidence type="ECO:0000256" key="3">
    <source>
        <dbReference type="SAM" id="MobiDB-lite"/>
    </source>
</evidence>
<name>KGUA_SYNJA</name>
<gene>
    <name evidence="2" type="primary">gmk</name>
    <name type="ordered locus">CYA_2697</name>
</gene>
<protein>
    <recommendedName>
        <fullName evidence="2">Guanylate kinase</fullName>
        <ecNumber evidence="2">2.7.4.8</ecNumber>
    </recommendedName>
    <alternativeName>
        <fullName evidence="2">GMP kinase</fullName>
    </alternativeName>
</protein>